<organism>
    <name type="scientific">Danio rerio</name>
    <name type="common">Zebrafish</name>
    <name type="synonym">Brachydanio rerio</name>
    <dbReference type="NCBI Taxonomy" id="7955"/>
    <lineage>
        <taxon>Eukaryota</taxon>
        <taxon>Metazoa</taxon>
        <taxon>Chordata</taxon>
        <taxon>Craniata</taxon>
        <taxon>Vertebrata</taxon>
        <taxon>Euteleostomi</taxon>
        <taxon>Actinopterygii</taxon>
        <taxon>Neopterygii</taxon>
        <taxon>Teleostei</taxon>
        <taxon>Ostariophysi</taxon>
        <taxon>Cypriniformes</taxon>
        <taxon>Danionidae</taxon>
        <taxon>Danioninae</taxon>
        <taxon>Danio</taxon>
    </lineage>
</organism>
<gene>
    <name evidence="9" type="primary">thbs3b</name>
    <name type="ORF">si:dkey-81h8.2</name>
</gene>
<accession>Q1L8P7</accession>
<proteinExistence type="inferred from homology"/>
<comment type="function">
    <text evidence="3">Adhesive glycoprotein that mediates cell-to-cell and cell-to-matrix interactions. Can bind to fibrinogen, fibronectin, laminin and type V collagen (By similarity).</text>
</comment>
<comment type="subunit">
    <text evidence="3">Oligomer; disulfide-linked.</text>
</comment>
<comment type="similarity">
    <text evidence="5">Belongs to the thrombospondin family.</text>
</comment>
<name>TSP3B_DANRE</name>
<sequence>MELRKIVPNLLVLYVAVHFSQSSEIKVINVLELHDVRQTAAAIENLSGALQTVGDLYITSTFMLPPKLGGVLFGLYDKQDNKKYLEIAVVGKINKLLVRYLRSDGKAHTVNLQNPALAEGRTQSLILRIGGLRRSHINLELYVNCRLVDSAQGLPSFVGLPSEAESVDVRTGQKSYARIQGLVESVKLALGGSLATAGLLIDCPFQGDSAINNAVVSDINAILGDHTKALIGQLIIFNQIMGELREDIREQTKEMSLIRNTILECQVCGFHEPQSRCLPNPCYTGVSCMESMMYPGYQCGPCPEELCVNTAKGFSCQSCPIGFTGPTLKGVGLEFAKRHKQHCVDIDECAELSGSCVPNSVCINTVGSFKCGQCKAGFVGNQTVGCFARRTCETLGYSPCDVNSHCVMGRNSDVSCVCNVGWAGNGNICGPDSDIDGYPDEPLPCMDNDKHCRADNCANTPNSGQEDTDGDGIGDQCDEDADGDGIKNVEDNCRLVPNKDQQNSDTDSYGDACDNCPNVPNGDQLDTDGNGKGDICDTDIDGDGIPNVLDNCPKIPNPMQTDRDGDGVGDACDSCPEVNDPLQSDMDNDLVGDVCDTNKDIDGDGYQDTRDNCPEVPNSSQLDSDNDGIGDECDDDDDNDGIPDILPPGPDNCRLVPNPSQIDTDANGVGDVCETDFDNDKVTDLLDACPESAEVTMTDFRAFQTVILDPEGDAQIDPNWVVLNQGMEIVQTMNSDPGLAVGYTAFNGVDFEGTIHVNTATDDDYVGFIFGYQDSSSFYVVMWKQTEQTYWQNLPFKALAQPGIQLKAVKSRTGPGEYLRNALWHTGDTTGEVTLLWKDPRNVGWKDRASYRWHLSHRPQVGYIRLRLYEGTALVADSGVVIDSTMRGGRLGVFCFSQENVIWSNLGYRCNDSIPDDFMLYHKQMKLRT</sequence>
<reference key="1">
    <citation type="journal article" date="2013" name="Nature">
        <title>The zebrafish reference genome sequence and its relationship to the human genome.</title>
        <authorList>
            <person name="Howe K."/>
            <person name="Clark M.D."/>
            <person name="Torroja C.F."/>
            <person name="Torrance J."/>
            <person name="Berthelot C."/>
            <person name="Muffato M."/>
            <person name="Collins J.E."/>
            <person name="Humphray S."/>
            <person name="McLaren K."/>
            <person name="Matthews L."/>
            <person name="McLaren S."/>
            <person name="Sealy I."/>
            <person name="Caccamo M."/>
            <person name="Churcher C."/>
            <person name="Scott C."/>
            <person name="Barrett J.C."/>
            <person name="Koch R."/>
            <person name="Rauch G.J."/>
            <person name="White S."/>
            <person name="Chow W."/>
            <person name="Kilian B."/>
            <person name="Quintais L.T."/>
            <person name="Guerra-Assuncao J.A."/>
            <person name="Zhou Y."/>
            <person name="Gu Y."/>
            <person name="Yen J."/>
            <person name="Vogel J.H."/>
            <person name="Eyre T."/>
            <person name="Redmond S."/>
            <person name="Banerjee R."/>
            <person name="Chi J."/>
            <person name="Fu B."/>
            <person name="Langley E."/>
            <person name="Maguire S.F."/>
            <person name="Laird G.K."/>
            <person name="Lloyd D."/>
            <person name="Kenyon E."/>
            <person name="Donaldson S."/>
            <person name="Sehra H."/>
            <person name="Almeida-King J."/>
            <person name="Loveland J."/>
            <person name="Trevanion S."/>
            <person name="Jones M."/>
            <person name="Quail M."/>
            <person name="Willey D."/>
            <person name="Hunt A."/>
            <person name="Burton J."/>
            <person name="Sims S."/>
            <person name="McLay K."/>
            <person name="Plumb B."/>
            <person name="Davis J."/>
            <person name="Clee C."/>
            <person name="Oliver K."/>
            <person name="Clark R."/>
            <person name="Riddle C."/>
            <person name="Elliot D."/>
            <person name="Threadgold G."/>
            <person name="Harden G."/>
            <person name="Ware D."/>
            <person name="Begum S."/>
            <person name="Mortimore B."/>
            <person name="Kerry G."/>
            <person name="Heath P."/>
            <person name="Phillimore B."/>
            <person name="Tracey A."/>
            <person name="Corby N."/>
            <person name="Dunn M."/>
            <person name="Johnson C."/>
            <person name="Wood J."/>
            <person name="Clark S."/>
            <person name="Pelan S."/>
            <person name="Griffiths G."/>
            <person name="Smith M."/>
            <person name="Glithero R."/>
            <person name="Howden P."/>
            <person name="Barker N."/>
            <person name="Lloyd C."/>
            <person name="Stevens C."/>
            <person name="Harley J."/>
            <person name="Holt K."/>
            <person name="Panagiotidis G."/>
            <person name="Lovell J."/>
            <person name="Beasley H."/>
            <person name="Henderson C."/>
            <person name="Gordon D."/>
            <person name="Auger K."/>
            <person name="Wright D."/>
            <person name="Collins J."/>
            <person name="Raisen C."/>
            <person name="Dyer L."/>
            <person name="Leung K."/>
            <person name="Robertson L."/>
            <person name="Ambridge K."/>
            <person name="Leongamornlert D."/>
            <person name="McGuire S."/>
            <person name="Gilderthorp R."/>
            <person name="Griffiths C."/>
            <person name="Manthravadi D."/>
            <person name="Nichol S."/>
            <person name="Barker G."/>
            <person name="Whitehead S."/>
            <person name="Kay M."/>
            <person name="Brown J."/>
            <person name="Murnane C."/>
            <person name="Gray E."/>
            <person name="Humphries M."/>
            <person name="Sycamore N."/>
            <person name="Barker D."/>
            <person name="Saunders D."/>
            <person name="Wallis J."/>
            <person name="Babbage A."/>
            <person name="Hammond S."/>
            <person name="Mashreghi-Mohammadi M."/>
            <person name="Barr L."/>
            <person name="Martin S."/>
            <person name="Wray P."/>
            <person name="Ellington A."/>
            <person name="Matthews N."/>
            <person name="Ellwood M."/>
            <person name="Woodmansey R."/>
            <person name="Clark G."/>
            <person name="Cooper J."/>
            <person name="Tromans A."/>
            <person name="Grafham D."/>
            <person name="Skuce C."/>
            <person name="Pandian R."/>
            <person name="Andrews R."/>
            <person name="Harrison E."/>
            <person name="Kimberley A."/>
            <person name="Garnett J."/>
            <person name="Fosker N."/>
            <person name="Hall R."/>
            <person name="Garner P."/>
            <person name="Kelly D."/>
            <person name="Bird C."/>
            <person name="Palmer S."/>
            <person name="Gehring I."/>
            <person name="Berger A."/>
            <person name="Dooley C.M."/>
            <person name="Ersan-Urun Z."/>
            <person name="Eser C."/>
            <person name="Geiger H."/>
            <person name="Geisler M."/>
            <person name="Karotki L."/>
            <person name="Kirn A."/>
            <person name="Konantz J."/>
            <person name="Konantz M."/>
            <person name="Oberlander M."/>
            <person name="Rudolph-Geiger S."/>
            <person name="Teucke M."/>
            <person name="Lanz C."/>
            <person name="Raddatz G."/>
            <person name="Osoegawa K."/>
            <person name="Zhu B."/>
            <person name="Rapp A."/>
            <person name="Widaa S."/>
            <person name="Langford C."/>
            <person name="Yang F."/>
            <person name="Schuster S.C."/>
            <person name="Carter N.P."/>
            <person name="Harrow J."/>
            <person name="Ning Z."/>
            <person name="Herrero J."/>
            <person name="Searle S.M."/>
            <person name="Enright A."/>
            <person name="Geisler R."/>
            <person name="Plasterk R.H."/>
            <person name="Lee C."/>
            <person name="Westerfield M."/>
            <person name="de Jong P.J."/>
            <person name="Zon L.I."/>
            <person name="Postlethwait J.H."/>
            <person name="Nusslein-Volhard C."/>
            <person name="Hubbard T.J."/>
            <person name="Roest Crollius H."/>
            <person name="Rogers J."/>
            <person name="Stemple D.L."/>
        </authorList>
    </citation>
    <scope>NUCLEOTIDE SEQUENCE [LARGE SCALE GENOMIC DNA]</scope>
    <source>
        <strain>Tuebingen</strain>
    </source>
</reference>
<dbReference type="EMBL" id="CR749746">
    <property type="protein sequence ID" value="CAK11219.1"/>
    <property type="molecule type" value="Genomic_DNA"/>
</dbReference>
<dbReference type="RefSeq" id="NP_001038679.1">
    <property type="nucleotide sequence ID" value="NM_001045214.1"/>
</dbReference>
<dbReference type="SMR" id="Q1L8P7"/>
<dbReference type="FunCoup" id="Q1L8P7">
    <property type="interactions" value="856"/>
</dbReference>
<dbReference type="STRING" id="7955.ENSDARP00000085258"/>
<dbReference type="GlyCosmos" id="Q1L8P7">
    <property type="glycosylation" value="4 sites, No reported glycans"/>
</dbReference>
<dbReference type="PaxDb" id="7955-ENSDARP00000085258"/>
<dbReference type="Ensembl" id="ENSDART00000090825">
    <property type="protein sequence ID" value="ENSDARP00000085258"/>
    <property type="gene ID" value="ENSDARG00000012060"/>
</dbReference>
<dbReference type="GeneID" id="571317"/>
<dbReference type="KEGG" id="dre:571317"/>
<dbReference type="AGR" id="ZFIN:ZDB-GENE-060503-84"/>
<dbReference type="CTD" id="571317"/>
<dbReference type="ZFIN" id="ZDB-GENE-060503-84">
    <property type="gene designation" value="thbs3b"/>
</dbReference>
<dbReference type="eggNOG" id="ENOG502QRK8">
    <property type="taxonomic scope" value="Eukaryota"/>
</dbReference>
<dbReference type="InParanoid" id="Q1L8P7"/>
<dbReference type="OrthoDB" id="14563at2759"/>
<dbReference type="PhylomeDB" id="Q1L8P7"/>
<dbReference type="TreeFam" id="TF324917"/>
<dbReference type="PRO" id="PR:Q1L8P7"/>
<dbReference type="Proteomes" id="UP000000437">
    <property type="component" value="Chromosome 19"/>
</dbReference>
<dbReference type="Bgee" id="ENSDARG00000012060">
    <property type="expression patterns" value="Expressed in pharyngeal gill and 8 other cell types or tissues"/>
</dbReference>
<dbReference type="ExpressionAtlas" id="Q1L8P7">
    <property type="expression patterns" value="baseline"/>
</dbReference>
<dbReference type="GO" id="GO:0062023">
    <property type="term" value="C:collagen-containing extracellular matrix"/>
    <property type="evidence" value="ECO:0000318"/>
    <property type="project" value="GO_Central"/>
</dbReference>
<dbReference type="GO" id="GO:0005576">
    <property type="term" value="C:extracellular region"/>
    <property type="evidence" value="ECO:0007669"/>
    <property type="project" value="InterPro"/>
</dbReference>
<dbReference type="GO" id="GO:0005509">
    <property type="term" value="F:calcium ion binding"/>
    <property type="evidence" value="ECO:0007669"/>
    <property type="project" value="InterPro"/>
</dbReference>
<dbReference type="GO" id="GO:0007155">
    <property type="term" value="P:cell adhesion"/>
    <property type="evidence" value="ECO:0007669"/>
    <property type="project" value="UniProtKB-KW"/>
</dbReference>
<dbReference type="CDD" id="cd00054">
    <property type="entry name" value="EGF_CA"/>
    <property type="match status" value="1"/>
</dbReference>
<dbReference type="FunFam" id="4.10.1080.10:FF:000004">
    <property type="entry name" value="Cartilage oligomeric matrix protein"/>
    <property type="match status" value="1"/>
</dbReference>
<dbReference type="FunFam" id="2.10.25.10:FF:000025">
    <property type="entry name" value="Thrombospondin 3"/>
    <property type="match status" value="1"/>
</dbReference>
<dbReference type="FunFam" id="2.60.120.200:FF:000002">
    <property type="entry name" value="Thrombospondin 3"/>
    <property type="match status" value="1"/>
</dbReference>
<dbReference type="FunFam" id="4.10.1080.10:FF:000001">
    <property type="entry name" value="Thrombospondin 3"/>
    <property type="match status" value="1"/>
</dbReference>
<dbReference type="FunFam" id="2.10.25.10:FF:000170">
    <property type="entry name" value="thrombospondin-3 isoform X1"/>
    <property type="match status" value="1"/>
</dbReference>
<dbReference type="FunFam" id="2.10.25.10:FF:000232">
    <property type="entry name" value="thrombospondin-3 isoform X1"/>
    <property type="match status" value="1"/>
</dbReference>
<dbReference type="FunFam" id="2.60.120.200:FF:000038">
    <property type="entry name" value="thrombospondin-3 isoform X1"/>
    <property type="match status" value="1"/>
</dbReference>
<dbReference type="FunFam" id="1.20.5.10:FF:000001">
    <property type="entry name" value="thrombospondin-3 isoform X2"/>
    <property type="match status" value="1"/>
</dbReference>
<dbReference type="Gene3D" id="1.20.5.10">
    <property type="match status" value="1"/>
</dbReference>
<dbReference type="Gene3D" id="2.60.120.200">
    <property type="match status" value="2"/>
</dbReference>
<dbReference type="Gene3D" id="2.10.25.10">
    <property type="entry name" value="Laminin"/>
    <property type="match status" value="3"/>
</dbReference>
<dbReference type="Gene3D" id="4.10.1080.10">
    <property type="entry name" value="TSP type-3 repeat"/>
    <property type="match status" value="2"/>
</dbReference>
<dbReference type="InterPro" id="IPR013320">
    <property type="entry name" value="ConA-like_dom_sf"/>
</dbReference>
<dbReference type="InterPro" id="IPR001881">
    <property type="entry name" value="EGF-like_Ca-bd_dom"/>
</dbReference>
<dbReference type="InterPro" id="IPR000742">
    <property type="entry name" value="EGF-like_dom"/>
</dbReference>
<dbReference type="InterPro" id="IPR018097">
    <property type="entry name" value="EGF_Ca-bd_CS"/>
</dbReference>
<dbReference type="InterPro" id="IPR049883">
    <property type="entry name" value="NOTCH1_EGF-like"/>
</dbReference>
<dbReference type="InterPro" id="IPR003367">
    <property type="entry name" value="Thrombospondin_3-like_rpt"/>
</dbReference>
<dbReference type="InterPro" id="IPR017897">
    <property type="entry name" value="Thrombospondin_3_rpt"/>
</dbReference>
<dbReference type="InterPro" id="IPR008859">
    <property type="entry name" value="Thrombospondin_C"/>
</dbReference>
<dbReference type="InterPro" id="IPR024665">
    <property type="entry name" value="TSP/COMP_coiled-coil"/>
</dbReference>
<dbReference type="InterPro" id="IPR046970">
    <property type="entry name" value="TSP/COMP_coiled-coil_sf"/>
</dbReference>
<dbReference type="InterPro" id="IPR028974">
    <property type="entry name" value="TSP_type-3_rpt"/>
</dbReference>
<dbReference type="InterPro" id="IPR048287">
    <property type="entry name" value="TSPN-like_N"/>
</dbReference>
<dbReference type="PANTHER" id="PTHR10199">
    <property type="entry name" value="THROMBOSPONDIN"/>
    <property type="match status" value="1"/>
</dbReference>
<dbReference type="PANTHER" id="PTHR10199:SF89">
    <property type="entry name" value="THROMBOSPONDIN-3"/>
    <property type="match status" value="1"/>
</dbReference>
<dbReference type="Pfam" id="PF11598">
    <property type="entry name" value="COMP"/>
    <property type="match status" value="1"/>
</dbReference>
<dbReference type="Pfam" id="PF07645">
    <property type="entry name" value="EGF_CA"/>
    <property type="match status" value="1"/>
</dbReference>
<dbReference type="Pfam" id="PF02412">
    <property type="entry name" value="TSP_3"/>
    <property type="match status" value="6"/>
</dbReference>
<dbReference type="Pfam" id="PF05735">
    <property type="entry name" value="TSP_C"/>
    <property type="match status" value="1"/>
</dbReference>
<dbReference type="SMART" id="SM00181">
    <property type="entry name" value="EGF"/>
    <property type="match status" value="3"/>
</dbReference>
<dbReference type="SMART" id="SM00179">
    <property type="entry name" value="EGF_CA"/>
    <property type="match status" value="2"/>
</dbReference>
<dbReference type="SMART" id="SM00210">
    <property type="entry name" value="TSPN"/>
    <property type="match status" value="1"/>
</dbReference>
<dbReference type="SUPFAM" id="SSF58006">
    <property type="entry name" value="Assembly domain of cartilage oligomeric matrix protein"/>
    <property type="match status" value="1"/>
</dbReference>
<dbReference type="SUPFAM" id="SSF49899">
    <property type="entry name" value="Concanavalin A-like lectins/glucanases"/>
    <property type="match status" value="1"/>
</dbReference>
<dbReference type="SUPFAM" id="SSF57196">
    <property type="entry name" value="EGF/Laminin"/>
    <property type="match status" value="1"/>
</dbReference>
<dbReference type="SUPFAM" id="SSF103647">
    <property type="entry name" value="TSP type-3 repeat"/>
    <property type="match status" value="3"/>
</dbReference>
<dbReference type="PROSITE" id="PS01186">
    <property type="entry name" value="EGF_2"/>
    <property type="match status" value="1"/>
</dbReference>
<dbReference type="PROSITE" id="PS50026">
    <property type="entry name" value="EGF_3"/>
    <property type="match status" value="2"/>
</dbReference>
<dbReference type="PROSITE" id="PS01187">
    <property type="entry name" value="EGF_CA"/>
    <property type="match status" value="1"/>
</dbReference>
<dbReference type="PROSITE" id="PS51234">
    <property type="entry name" value="TSP3"/>
    <property type="match status" value="8"/>
</dbReference>
<dbReference type="PROSITE" id="PS51236">
    <property type="entry name" value="TSP_CTER"/>
    <property type="match status" value="1"/>
</dbReference>
<feature type="signal peptide" evidence="5">
    <location>
        <begin position="1"/>
        <end position="22"/>
    </location>
</feature>
<feature type="chain" id="PRO_0000247618" description="Thrombospondin-3b" evidence="5">
    <location>
        <begin position="23"/>
        <end position="929"/>
    </location>
</feature>
<feature type="domain" description="Laminin G-like">
    <location>
        <begin position="24"/>
        <end position="192"/>
    </location>
</feature>
<feature type="domain" description="EGF-like 1; calcium-binding" evidence="6">
    <location>
        <begin position="345"/>
        <end position="384"/>
    </location>
</feature>
<feature type="domain" description="EGF-like 2" evidence="6">
    <location>
        <begin position="388"/>
        <end position="430"/>
    </location>
</feature>
<feature type="repeat" description="TSP type-3 1">
    <location>
        <begin position="431"/>
        <end position="465"/>
    </location>
</feature>
<feature type="repeat" description="TSP type-3 2">
    <location>
        <begin position="466"/>
        <end position="501"/>
    </location>
</feature>
<feature type="repeat" description="TSP type-3 3">
    <location>
        <begin position="502"/>
        <end position="524"/>
    </location>
</feature>
<feature type="repeat" description="TSP type-3 4">
    <location>
        <begin position="525"/>
        <end position="560"/>
    </location>
</feature>
<feature type="repeat" description="TSP type-3 5">
    <location>
        <begin position="561"/>
        <end position="583"/>
    </location>
</feature>
<feature type="repeat" description="TSP type-3 6">
    <location>
        <begin position="584"/>
        <end position="621"/>
    </location>
</feature>
<feature type="repeat" description="TSP type-3 7">
    <location>
        <begin position="622"/>
        <end position="661"/>
    </location>
</feature>
<feature type="repeat" description="TSP type-3 8">
    <location>
        <begin position="662"/>
        <end position="697"/>
    </location>
</feature>
<feature type="domain" description="TSP C-terminal" evidence="7">
    <location>
        <begin position="701"/>
        <end position="915"/>
    </location>
</feature>
<feature type="region of interest" description="Disordered" evidence="8">
    <location>
        <begin position="602"/>
        <end position="651"/>
    </location>
</feature>
<feature type="compositionally biased region" description="Basic and acidic residues" evidence="8">
    <location>
        <begin position="602"/>
        <end position="613"/>
    </location>
</feature>
<feature type="compositionally biased region" description="Acidic residues" evidence="8">
    <location>
        <begin position="624"/>
        <end position="641"/>
    </location>
</feature>
<feature type="glycosylation site" description="N-linked (GlcNAc...) asparagine" evidence="5">
    <location>
        <position position="45"/>
    </location>
</feature>
<feature type="glycosylation site" description="N-linked (GlcNAc...) asparagine" evidence="5">
    <location>
        <position position="381"/>
    </location>
</feature>
<feature type="glycosylation site" description="N-linked (GlcNAc...) asparagine" evidence="5">
    <location>
        <position position="618"/>
    </location>
</feature>
<feature type="glycosylation site" description="N-linked (GlcNAc...) asparagine" evidence="5">
    <location>
        <position position="911"/>
    </location>
</feature>
<feature type="disulfide bond" description="Interchain" evidence="4 6">
    <location>
        <position position="265"/>
    </location>
</feature>
<feature type="disulfide bond" description="Interchain" evidence="4 6">
    <location>
        <position position="268"/>
    </location>
</feature>
<feature type="disulfide bond" evidence="2 6">
    <location>
        <begin position="277"/>
        <end position="288"/>
    </location>
</feature>
<feature type="disulfide bond" evidence="2 6">
    <location>
        <begin position="282"/>
        <end position="299"/>
    </location>
</feature>
<feature type="disulfide bond" evidence="2 6">
    <location>
        <begin position="319"/>
        <end position="343"/>
    </location>
</feature>
<feature type="disulfide bond" evidence="2 6">
    <location>
        <begin position="349"/>
        <end position="362"/>
    </location>
</feature>
<feature type="disulfide bond" evidence="2 6">
    <location>
        <begin position="356"/>
        <end position="371"/>
    </location>
</feature>
<feature type="disulfide bond" evidence="2 6">
    <location>
        <begin position="374"/>
        <end position="386"/>
    </location>
</feature>
<feature type="disulfide bond" evidence="2 6">
    <location>
        <begin position="392"/>
        <end position="406"/>
    </location>
</feature>
<feature type="disulfide bond" evidence="2 6">
    <location>
        <begin position="400"/>
        <end position="416"/>
    </location>
</feature>
<feature type="disulfide bond" evidence="2 6">
    <location>
        <begin position="418"/>
        <end position="429"/>
    </location>
</feature>
<feature type="disulfide bond" evidence="1 6">
    <location>
        <begin position="445"/>
        <end position="452"/>
    </location>
</feature>
<feature type="disulfide bond" evidence="1 6">
    <location>
        <begin position="457"/>
        <end position="477"/>
    </location>
</feature>
<feature type="disulfide bond" evidence="1 6">
    <location>
        <begin position="493"/>
        <end position="513"/>
    </location>
</feature>
<feature type="disulfide bond" evidence="1 6">
    <location>
        <begin position="516"/>
        <end position="536"/>
    </location>
</feature>
<feature type="disulfide bond" evidence="1 6">
    <location>
        <begin position="552"/>
        <end position="572"/>
    </location>
</feature>
<feature type="disulfide bond" evidence="1 6">
    <location>
        <begin position="575"/>
        <end position="595"/>
    </location>
</feature>
<feature type="disulfide bond" evidence="1 6">
    <location>
        <begin position="613"/>
        <end position="633"/>
    </location>
</feature>
<feature type="disulfide bond" evidence="1 6">
    <location>
        <begin position="653"/>
        <end position="673"/>
    </location>
</feature>
<feature type="disulfide bond" evidence="1 6">
    <location>
        <begin position="689"/>
        <end position="910"/>
    </location>
</feature>
<protein>
    <recommendedName>
        <fullName>Thrombospondin-3b</fullName>
        <shortName>Thbs3b</shortName>
    </recommendedName>
</protein>
<keyword id="KW-0106">Calcium</keyword>
<keyword id="KW-0130">Cell adhesion</keyword>
<keyword id="KW-1015">Disulfide bond</keyword>
<keyword id="KW-0245">EGF-like domain</keyword>
<keyword id="KW-0325">Glycoprotein</keyword>
<keyword id="KW-1185">Reference proteome</keyword>
<keyword id="KW-0677">Repeat</keyword>
<keyword id="KW-0732">Signal</keyword>
<evidence type="ECO:0000250" key="1">
    <source>
        <dbReference type="UniProtKB" id="P35442"/>
    </source>
</evidence>
<evidence type="ECO:0000250" key="2">
    <source>
        <dbReference type="UniProtKB" id="P49746"/>
    </source>
</evidence>
<evidence type="ECO:0000250" key="3">
    <source>
        <dbReference type="UniProtKB" id="Q05895"/>
    </source>
</evidence>
<evidence type="ECO:0000250" key="4">
    <source>
        <dbReference type="UniProtKB" id="Q9R0G6"/>
    </source>
</evidence>
<evidence type="ECO:0000255" key="5"/>
<evidence type="ECO:0000255" key="6">
    <source>
        <dbReference type="PROSITE-ProRule" id="PRU00076"/>
    </source>
</evidence>
<evidence type="ECO:0000255" key="7">
    <source>
        <dbReference type="PROSITE-ProRule" id="PRU00635"/>
    </source>
</evidence>
<evidence type="ECO:0000256" key="8">
    <source>
        <dbReference type="SAM" id="MobiDB-lite"/>
    </source>
</evidence>
<evidence type="ECO:0000312" key="9">
    <source>
        <dbReference type="ZFIN" id="ZDB-GENE-060503-84"/>
    </source>
</evidence>